<protein>
    <recommendedName>
        <fullName evidence="1">Large ribosomal subunit protein uL16</fullName>
    </recommendedName>
    <alternativeName>
        <fullName evidence="3">50S ribosomal protein L16</fullName>
    </alternativeName>
</protein>
<reference key="1">
    <citation type="journal article" date="2009" name="PLoS ONE">
        <title>The complete genome of Teredinibacter turnerae T7901: an intracellular endosymbiont of marine wood-boring bivalves (shipworms).</title>
        <authorList>
            <person name="Yang J.C."/>
            <person name="Madupu R."/>
            <person name="Durkin A.S."/>
            <person name="Ekborg N.A."/>
            <person name="Pedamallu C.S."/>
            <person name="Hostetler J.B."/>
            <person name="Radune D."/>
            <person name="Toms B.S."/>
            <person name="Henrissat B."/>
            <person name="Coutinho P.M."/>
            <person name="Schwarz S."/>
            <person name="Field L."/>
            <person name="Trindade-Silva A.E."/>
            <person name="Soares C.A.G."/>
            <person name="Elshahawi S."/>
            <person name="Hanora A."/>
            <person name="Schmidt E.W."/>
            <person name="Haygood M.G."/>
            <person name="Posfai J."/>
            <person name="Benner J."/>
            <person name="Madinger C."/>
            <person name="Nove J."/>
            <person name="Anton B."/>
            <person name="Chaudhary K."/>
            <person name="Foster J."/>
            <person name="Holman A."/>
            <person name="Kumar S."/>
            <person name="Lessard P.A."/>
            <person name="Luyten Y.A."/>
            <person name="Slatko B."/>
            <person name="Wood N."/>
            <person name="Wu B."/>
            <person name="Teplitski M."/>
            <person name="Mougous J.D."/>
            <person name="Ward N."/>
            <person name="Eisen J.A."/>
            <person name="Badger J.H."/>
            <person name="Distel D.L."/>
        </authorList>
    </citation>
    <scope>NUCLEOTIDE SEQUENCE [LARGE SCALE GENOMIC DNA]</scope>
    <source>
        <strain>ATCC 39867 / T7901</strain>
    </source>
</reference>
<gene>
    <name evidence="1" type="primary">rplP</name>
    <name type="ordered locus">TERTU_0915</name>
</gene>
<keyword id="KW-1185">Reference proteome</keyword>
<keyword id="KW-0687">Ribonucleoprotein</keyword>
<keyword id="KW-0689">Ribosomal protein</keyword>
<keyword id="KW-0694">RNA-binding</keyword>
<keyword id="KW-0699">rRNA-binding</keyword>
<keyword id="KW-0820">tRNA-binding</keyword>
<comment type="function">
    <text evidence="1">Binds 23S rRNA and is also seen to make contacts with the A and possibly P site tRNAs.</text>
</comment>
<comment type="subunit">
    <text evidence="1">Part of the 50S ribosomal subunit.</text>
</comment>
<comment type="similarity">
    <text evidence="1">Belongs to the universal ribosomal protein uL16 family.</text>
</comment>
<proteinExistence type="inferred from homology"/>
<organism>
    <name type="scientific">Teredinibacter turnerae (strain ATCC 39867 / T7901)</name>
    <dbReference type="NCBI Taxonomy" id="377629"/>
    <lineage>
        <taxon>Bacteria</taxon>
        <taxon>Pseudomonadati</taxon>
        <taxon>Pseudomonadota</taxon>
        <taxon>Gammaproteobacteria</taxon>
        <taxon>Cellvibrionales</taxon>
        <taxon>Cellvibrionaceae</taxon>
        <taxon>Teredinibacter</taxon>
    </lineage>
</organism>
<name>RL16_TERTT</name>
<accession>C5BQ68</accession>
<dbReference type="EMBL" id="CP001614">
    <property type="protein sequence ID" value="ACR13703.1"/>
    <property type="molecule type" value="Genomic_DNA"/>
</dbReference>
<dbReference type="RefSeq" id="WP_015819818.1">
    <property type="nucleotide sequence ID" value="NC_012997.1"/>
</dbReference>
<dbReference type="SMR" id="C5BQ68"/>
<dbReference type="STRING" id="377629.TERTU_0915"/>
<dbReference type="GeneID" id="58408689"/>
<dbReference type="GeneID" id="93857736"/>
<dbReference type="KEGG" id="ttu:TERTU_0915"/>
<dbReference type="eggNOG" id="COG0197">
    <property type="taxonomic scope" value="Bacteria"/>
</dbReference>
<dbReference type="HOGENOM" id="CLU_078858_2_1_6"/>
<dbReference type="OrthoDB" id="9802589at2"/>
<dbReference type="Proteomes" id="UP000009080">
    <property type="component" value="Chromosome"/>
</dbReference>
<dbReference type="GO" id="GO:0022625">
    <property type="term" value="C:cytosolic large ribosomal subunit"/>
    <property type="evidence" value="ECO:0007669"/>
    <property type="project" value="TreeGrafter"/>
</dbReference>
<dbReference type="GO" id="GO:0019843">
    <property type="term" value="F:rRNA binding"/>
    <property type="evidence" value="ECO:0007669"/>
    <property type="project" value="UniProtKB-UniRule"/>
</dbReference>
<dbReference type="GO" id="GO:0003735">
    <property type="term" value="F:structural constituent of ribosome"/>
    <property type="evidence" value="ECO:0007669"/>
    <property type="project" value="InterPro"/>
</dbReference>
<dbReference type="GO" id="GO:0000049">
    <property type="term" value="F:tRNA binding"/>
    <property type="evidence" value="ECO:0007669"/>
    <property type="project" value="UniProtKB-KW"/>
</dbReference>
<dbReference type="GO" id="GO:0006412">
    <property type="term" value="P:translation"/>
    <property type="evidence" value="ECO:0007669"/>
    <property type="project" value="UniProtKB-UniRule"/>
</dbReference>
<dbReference type="CDD" id="cd01433">
    <property type="entry name" value="Ribosomal_L16_L10e"/>
    <property type="match status" value="1"/>
</dbReference>
<dbReference type="FunFam" id="3.90.1170.10:FF:000001">
    <property type="entry name" value="50S ribosomal protein L16"/>
    <property type="match status" value="1"/>
</dbReference>
<dbReference type="Gene3D" id="3.90.1170.10">
    <property type="entry name" value="Ribosomal protein L10e/L16"/>
    <property type="match status" value="1"/>
</dbReference>
<dbReference type="HAMAP" id="MF_01342">
    <property type="entry name" value="Ribosomal_uL16"/>
    <property type="match status" value="1"/>
</dbReference>
<dbReference type="InterPro" id="IPR047873">
    <property type="entry name" value="Ribosomal_uL16"/>
</dbReference>
<dbReference type="InterPro" id="IPR000114">
    <property type="entry name" value="Ribosomal_uL16_bact-type"/>
</dbReference>
<dbReference type="InterPro" id="IPR020798">
    <property type="entry name" value="Ribosomal_uL16_CS"/>
</dbReference>
<dbReference type="InterPro" id="IPR016180">
    <property type="entry name" value="Ribosomal_uL16_dom"/>
</dbReference>
<dbReference type="InterPro" id="IPR036920">
    <property type="entry name" value="Ribosomal_uL16_sf"/>
</dbReference>
<dbReference type="NCBIfam" id="TIGR01164">
    <property type="entry name" value="rplP_bact"/>
    <property type="match status" value="1"/>
</dbReference>
<dbReference type="PANTHER" id="PTHR12220">
    <property type="entry name" value="50S/60S RIBOSOMAL PROTEIN L16"/>
    <property type="match status" value="1"/>
</dbReference>
<dbReference type="PANTHER" id="PTHR12220:SF13">
    <property type="entry name" value="LARGE RIBOSOMAL SUBUNIT PROTEIN UL16M"/>
    <property type="match status" value="1"/>
</dbReference>
<dbReference type="Pfam" id="PF00252">
    <property type="entry name" value="Ribosomal_L16"/>
    <property type="match status" value="1"/>
</dbReference>
<dbReference type="PRINTS" id="PR00060">
    <property type="entry name" value="RIBOSOMALL16"/>
</dbReference>
<dbReference type="SUPFAM" id="SSF54686">
    <property type="entry name" value="Ribosomal protein L16p/L10e"/>
    <property type="match status" value="1"/>
</dbReference>
<dbReference type="PROSITE" id="PS00586">
    <property type="entry name" value="RIBOSOMAL_L16_1"/>
    <property type="match status" value="1"/>
</dbReference>
<evidence type="ECO:0000255" key="1">
    <source>
        <dbReference type="HAMAP-Rule" id="MF_01342"/>
    </source>
</evidence>
<evidence type="ECO:0000256" key="2">
    <source>
        <dbReference type="SAM" id="MobiDB-lite"/>
    </source>
</evidence>
<evidence type="ECO:0000305" key="3"/>
<sequence length="137" mass="15522">MLQPKRTKFRKQMKGRNRGLAQRGSKVSFGEFGLKAVARGRITARQIEAARRAMTRHVKRGGKIWIRVFPDKPITEKPLEVRQGKGKGNVEYWVAQIQPGKVLYEMEGVSEELAREAFALAAAKLPLNTTFVKRSVM</sequence>
<feature type="chain" id="PRO_1000214746" description="Large ribosomal subunit protein uL16">
    <location>
        <begin position="1"/>
        <end position="137"/>
    </location>
</feature>
<feature type="region of interest" description="Disordered" evidence="2">
    <location>
        <begin position="1"/>
        <end position="22"/>
    </location>
</feature>
<feature type="compositionally biased region" description="Basic residues" evidence="2">
    <location>
        <begin position="1"/>
        <end position="17"/>
    </location>
</feature>